<dbReference type="EMBL" id="AF394558">
    <property type="protein sequence ID" value="AAL24494.1"/>
    <property type="molecule type" value="Genomic_DNA"/>
</dbReference>
<dbReference type="EMBL" id="AP005428">
    <property type="protein sequence ID" value="BAD28626.1"/>
    <property type="molecule type" value="Genomic_DNA"/>
</dbReference>
<dbReference type="EMBL" id="AP005428">
    <property type="protein sequence ID" value="BAD28629.1"/>
    <property type="molecule type" value="Genomic_DNA"/>
</dbReference>
<dbReference type="EMBL" id="AP014958">
    <property type="status" value="NOT_ANNOTATED_CDS"/>
    <property type="molecule type" value="Genomic_DNA"/>
</dbReference>
<dbReference type="EMBL" id="DQ061064">
    <property type="protein sequence ID" value="AAY63555.1"/>
    <property type="molecule type" value="mRNA"/>
</dbReference>
<dbReference type="SMR" id="Q4PR43"/>
<dbReference type="FunCoup" id="Q4PR43">
    <property type="interactions" value="15"/>
</dbReference>
<dbReference type="STRING" id="39947.Q4PR43"/>
<dbReference type="PaxDb" id="39947-Q4PR43"/>
<dbReference type="eggNOG" id="ENOG502SWQD">
    <property type="taxonomic scope" value="Eukaryota"/>
</dbReference>
<dbReference type="HOGENOM" id="CLU_027462_0_1_1"/>
<dbReference type="InParanoid" id="Q4PR43"/>
<dbReference type="Proteomes" id="UP000000763">
    <property type="component" value="Chromosome 2"/>
</dbReference>
<dbReference type="Proteomes" id="UP000059680">
    <property type="component" value="Chromosome 2"/>
</dbReference>
<dbReference type="GO" id="GO:0005576">
    <property type="term" value="C:extracellular region"/>
    <property type="evidence" value="ECO:0007669"/>
    <property type="project" value="UniProtKB-KW"/>
</dbReference>
<dbReference type="GO" id="GO:0016020">
    <property type="term" value="C:membrane"/>
    <property type="evidence" value="ECO:0007669"/>
    <property type="project" value="UniProtKB-SubCell"/>
</dbReference>
<dbReference type="GO" id="GO:0009828">
    <property type="term" value="P:plant-type cell wall loosening"/>
    <property type="evidence" value="ECO:0000250"/>
    <property type="project" value="UniProtKB"/>
</dbReference>
<dbReference type="CDD" id="cd22274">
    <property type="entry name" value="DPBB_EXPA_N"/>
    <property type="match status" value="1"/>
</dbReference>
<dbReference type="FunFam" id="2.40.40.10:FF:000001">
    <property type="entry name" value="Expansin"/>
    <property type="match status" value="1"/>
</dbReference>
<dbReference type="Gene3D" id="2.60.40.760">
    <property type="entry name" value="Expansin, cellulose-binding-like domain"/>
    <property type="match status" value="1"/>
</dbReference>
<dbReference type="Gene3D" id="2.40.40.10">
    <property type="entry name" value="RlpA-like domain"/>
    <property type="match status" value="1"/>
</dbReference>
<dbReference type="InterPro" id="IPR007118">
    <property type="entry name" value="Expan_Lol_pI"/>
</dbReference>
<dbReference type="InterPro" id="IPR002963">
    <property type="entry name" value="Expansin"/>
</dbReference>
<dbReference type="InterPro" id="IPR007112">
    <property type="entry name" value="Expansin/allergen_DPBB_dom"/>
</dbReference>
<dbReference type="InterPro" id="IPR007117">
    <property type="entry name" value="Expansin_CBD"/>
</dbReference>
<dbReference type="InterPro" id="IPR036749">
    <property type="entry name" value="Expansin_CBD_sf"/>
</dbReference>
<dbReference type="InterPro" id="IPR009009">
    <property type="entry name" value="RlpA-like_DPBB"/>
</dbReference>
<dbReference type="InterPro" id="IPR036908">
    <property type="entry name" value="RlpA-like_sf"/>
</dbReference>
<dbReference type="PANTHER" id="PTHR31867">
    <property type="entry name" value="EXPANSIN-A15"/>
    <property type="match status" value="1"/>
</dbReference>
<dbReference type="Pfam" id="PF03330">
    <property type="entry name" value="DPBB_1"/>
    <property type="match status" value="1"/>
</dbReference>
<dbReference type="Pfam" id="PF01357">
    <property type="entry name" value="Expansin_C"/>
    <property type="match status" value="1"/>
</dbReference>
<dbReference type="PRINTS" id="PR01226">
    <property type="entry name" value="EXPANSIN"/>
</dbReference>
<dbReference type="PRINTS" id="PR01225">
    <property type="entry name" value="EXPANSNFAMLY"/>
</dbReference>
<dbReference type="SMART" id="SM00837">
    <property type="entry name" value="DPBB_1"/>
    <property type="match status" value="1"/>
</dbReference>
<dbReference type="SUPFAM" id="SSF50685">
    <property type="entry name" value="Barwin-like endoglucanases"/>
    <property type="match status" value="1"/>
</dbReference>
<dbReference type="SUPFAM" id="SSF49590">
    <property type="entry name" value="PHL pollen allergen"/>
    <property type="match status" value="1"/>
</dbReference>
<dbReference type="PROSITE" id="PS50843">
    <property type="entry name" value="EXPANSIN_CBD"/>
    <property type="match status" value="1"/>
</dbReference>
<dbReference type="PROSITE" id="PS50842">
    <property type="entry name" value="EXPANSIN_EG45"/>
    <property type="match status" value="1"/>
</dbReference>
<organism>
    <name type="scientific">Oryza sativa subsp. japonica</name>
    <name type="common">Rice</name>
    <dbReference type="NCBI Taxonomy" id="39947"/>
    <lineage>
        <taxon>Eukaryota</taxon>
        <taxon>Viridiplantae</taxon>
        <taxon>Streptophyta</taxon>
        <taxon>Embryophyta</taxon>
        <taxon>Tracheophyta</taxon>
        <taxon>Spermatophyta</taxon>
        <taxon>Magnoliopsida</taxon>
        <taxon>Liliopsida</taxon>
        <taxon>Poales</taxon>
        <taxon>Poaceae</taxon>
        <taxon>BOP clade</taxon>
        <taxon>Oryzoideae</taxon>
        <taxon>Oryzeae</taxon>
        <taxon>Oryzinae</taxon>
        <taxon>Oryza</taxon>
        <taxon>Oryza sativa</taxon>
    </lineage>
</organism>
<proteinExistence type="evidence at transcript level"/>
<gene>
    <name type="primary">EXPA23.1</name>
    <name type="synonym">EXP23.1</name>
    <name type="ordered locus">Os02g0268000</name>
    <name type="ordered locus">LOC_Os02g16809</name>
    <name type="ORF">P0693E08.13</name>
</gene>
<gene>
    <name type="primary">EXPA23.2</name>
    <name type="synonym">EXP23.2</name>
</gene>
<protein>
    <recommendedName>
        <fullName>Expansin-A23</fullName>
    </recommendedName>
    <alternativeName>
        <fullName>Alpha-expansin-23</fullName>
    </alternativeName>
    <alternativeName>
        <fullName>OsEXP23</fullName>
    </alternativeName>
    <alternativeName>
        <fullName>OsEXPA23</fullName>
    </alternativeName>
    <alternativeName>
        <fullName>OsaEXPa1.12</fullName>
    </alternativeName>
</protein>
<sequence>MAPARAFVLVLLAVASASTAAANTATTTPTNPVAAPTQWQKAHATFYGGADASGTMGGACGYGNLYSQGYGTRNAALSTALFNDGASCGQCYKIACDRKRAPQWCKPGVTVTITATNFCPPNWNLPSDNGGWCNPPRPHFDMAQPAWEKIGVYSAGIIPVIYQRVPCVKKGGLRFTINGHDYFQLVLVTNVAAAGSIKSMEVMGSNTADWMPMARNWGAQWHSLAYLTGQGLSFRVTNTDDQTLVFTNVVPPGWKFGQTFASKLQFK</sequence>
<comment type="function">
    <text evidence="1">May cause loosening and extension of plant cell walls by disrupting non-covalent bonding between cellulose microfibrils and matrix glucans. No enzymatic activity has been found. May be required for rapid internodal elongation in deepwater rice during submergence (By similarity).</text>
</comment>
<comment type="subcellular location">
    <subcellularLocation>
        <location evidence="1">Secreted</location>
        <location evidence="1">Cell wall</location>
    </subcellularLocation>
    <subcellularLocation>
        <location evidence="1">Membrane</location>
        <topology evidence="1">Peripheral membrane protein</topology>
    </subcellularLocation>
</comment>
<comment type="similarity">
    <text evidence="5">Belongs to the expansin family. Expansin A subfamily.</text>
</comment>
<comment type="online information" name="EXPANSIN homepage">
    <link uri="https://www.dept.psu.edu/biology/groups/expansins/index.htm"/>
</comment>
<keyword id="KW-0134">Cell wall</keyword>
<keyword id="KW-0961">Cell wall biogenesis/degradation</keyword>
<keyword id="KW-0472">Membrane</keyword>
<keyword id="KW-1185">Reference proteome</keyword>
<keyword id="KW-0964">Secreted</keyword>
<keyword id="KW-0732">Signal</keyword>
<evidence type="ECO:0000250" key="1"/>
<evidence type="ECO:0000255" key="2"/>
<evidence type="ECO:0000255" key="3">
    <source>
        <dbReference type="PROSITE-ProRule" id="PRU00078"/>
    </source>
</evidence>
<evidence type="ECO:0000255" key="4">
    <source>
        <dbReference type="PROSITE-ProRule" id="PRU00079"/>
    </source>
</evidence>
<evidence type="ECO:0000305" key="5"/>
<name>EXP23_ORYSJ</name>
<reference key="1">
    <citation type="journal article" date="2002" name="Plant Physiol.">
        <title>Expression of alpha-expansin and expansin-like genes in deepwater rice.</title>
        <authorList>
            <person name="Lee Y."/>
            <person name="Kende H."/>
        </authorList>
    </citation>
    <scope>NUCLEOTIDE SEQUENCE [GENOMIC DNA]</scope>
</reference>
<reference key="2">
    <citation type="journal article" date="2005" name="Nature">
        <title>The map-based sequence of the rice genome.</title>
        <authorList>
            <consortium name="International rice genome sequencing project (IRGSP)"/>
        </authorList>
    </citation>
    <scope>NUCLEOTIDE SEQUENCE [LARGE SCALE GENOMIC DNA]</scope>
    <source>
        <strain>cv. Nipponbare</strain>
    </source>
</reference>
<reference key="3">
    <citation type="journal article" date="2013" name="Rice">
        <title>Improvement of the Oryza sativa Nipponbare reference genome using next generation sequence and optical map data.</title>
        <authorList>
            <person name="Kawahara Y."/>
            <person name="de la Bastide M."/>
            <person name="Hamilton J.P."/>
            <person name="Kanamori H."/>
            <person name="McCombie W.R."/>
            <person name="Ouyang S."/>
            <person name="Schwartz D.C."/>
            <person name="Tanaka T."/>
            <person name="Wu J."/>
            <person name="Zhou S."/>
            <person name="Childs K.L."/>
            <person name="Davidson R.M."/>
            <person name="Lin H."/>
            <person name="Quesada-Ocampo L."/>
            <person name="Vaillancourt B."/>
            <person name="Sakai H."/>
            <person name="Lee S.S."/>
            <person name="Kim J."/>
            <person name="Numa H."/>
            <person name="Itoh T."/>
            <person name="Buell C.R."/>
            <person name="Matsumoto T."/>
        </authorList>
    </citation>
    <scope>GENOME REANNOTATION</scope>
    <source>
        <strain>cv. Nipponbare</strain>
    </source>
</reference>
<reference key="4">
    <citation type="journal article" date="2005" name="Mol. Cells">
        <title>Characterization and transcriptional expression of the alpha-expansin gene family in rice.</title>
        <authorList>
            <person name="Shin J.-H."/>
            <person name="Jeong D.-H."/>
            <person name="Park M.C."/>
            <person name="An G."/>
        </authorList>
    </citation>
    <scope>NUCLEOTIDE SEQUENCE [MRNA] OF 7-267 (EXPA23.1 AND EXPA23.2)</scope>
    <source>
        <strain>cv. Dongjin</strain>
    </source>
</reference>
<reference key="5">
    <citation type="journal article" date="2004" name="Plant Mol. Biol.">
        <title>Nomenclature for members of the expansin superfamily of genes and proteins.</title>
        <authorList>
            <person name="Kende H."/>
            <person name="Bradford K.J."/>
            <person name="Brummell D.A."/>
            <person name="Cho H.-T."/>
            <person name="Cosgrove D.J."/>
            <person name="Fleming A.J."/>
            <person name="Gehring C."/>
            <person name="Lee Y."/>
            <person name="McQueen-Mason S.J."/>
            <person name="Rose J.K.C."/>
            <person name="Voesenek L.A.C."/>
        </authorList>
    </citation>
    <scope>NOMENCLATURE</scope>
</reference>
<accession>Q4PR43</accession>
<accession>Q6ERU4</accession>
<accession>Q946H9</accession>
<feature type="signal peptide" evidence="2">
    <location>
        <begin position="1"/>
        <end position="21"/>
    </location>
</feature>
<feature type="chain" id="PRO_0000252002" description="Expansin-A23">
    <location>
        <begin position="22"/>
        <end position="267"/>
    </location>
</feature>
<feature type="domain" description="Expansin-like EG45" evidence="4">
    <location>
        <begin position="57"/>
        <end position="172"/>
    </location>
</feature>
<feature type="domain" description="Expansin-like CBD" evidence="3">
    <location>
        <begin position="182"/>
        <end position="262"/>
    </location>
</feature>